<feature type="chain" id="PRO_1000090510" description="Crossover junction endodeoxyribonuclease RuvC">
    <location>
        <begin position="1"/>
        <end position="180"/>
    </location>
</feature>
<feature type="active site" evidence="1">
    <location>
        <position position="7"/>
    </location>
</feature>
<feature type="active site" evidence="1">
    <location>
        <position position="66"/>
    </location>
</feature>
<feature type="active site" evidence="1">
    <location>
        <position position="138"/>
    </location>
</feature>
<feature type="binding site" evidence="1">
    <location>
        <position position="7"/>
    </location>
    <ligand>
        <name>Mg(2+)</name>
        <dbReference type="ChEBI" id="CHEBI:18420"/>
        <label>1</label>
    </ligand>
</feature>
<feature type="binding site" evidence="1">
    <location>
        <position position="66"/>
    </location>
    <ligand>
        <name>Mg(2+)</name>
        <dbReference type="ChEBI" id="CHEBI:18420"/>
        <label>2</label>
    </ligand>
</feature>
<feature type="binding site" evidence="1">
    <location>
        <position position="138"/>
    </location>
    <ligand>
        <name>Mg(2+)</name>
        <dbReference type="ChEBI" id="CHEBI:18420"/>
        <label>1</label>
    </ligand>
</feature>
<name>RUVC_PARPJ</name>
<protein>
    <recommendedName>
        <fullName evidence="1">Crossover junction endodeoxyribonuclease RuvC</fullName>
        <ecNumber evidence="1">3.1.21.10</ecNumber>
    </recommendedName>
    <alternativeName>
        <fullName evidence="1">Holliday junction nuclease RuvC</fullName>
    </alternativeName>
    <alternativeName>
        <fullName evidence="1">Holliday junction resolvase RuvC</fullName>
    </alternativeName>
</protein>
<evidence type="ECO:0000255" key="1">
    <source>
        <dbReference type="HAMAP-Rule" id="MF_00034"/>
    </source>
</evidence>
<organism>
    <name type="scientific">Paraburkholderia phytofirmans (strain DSM 17436 / LMG 22146 / PsJN)</name>
    <name type="common">Burkholderia phytofirmans</name>
    <dbReference type="NCBI Taxonomy" id="398527"/>
    <lineage>
        <taxon>Bacteria</taxon>
        <taxon>Pseudomonadati</taxon>
        <taxon>Pseudomonadota</taxon>
        <taxon>Betaproteobacteria</taxon>
        <taxon>Burkholderiales</taxon>
        <taxon>Burkholderiaceae</taxon>
        <taxon>Paraburkholderia</taxon>
    </lineage>
</organism>
<accession>B2SYJ9</accession>
<keyword id="KW-0963">Cytoplasm</keyword>
<keyword id="KW-0227">DNA damage</keyword>
<keyword id="KW-0233">DNA recombination</keyword>
<keyword id="KW-0234">DNA repair</keyword>
<keyword id="KW-0238">DNA-binding</keyword>
<keyword id="KW-0255">Endonuclease</keyword>
<keyword id="KW-0378">Hydrolase</keyword>
<keyword id="KW-0460">Magnesium</keyword>
<keyword id="KW-0479">Metal-binding</keyword>
<keyword id="KW-0540">Nuclease</keyword>
<sequence length="180" mass="18626">MRILGIDPGLRVTGFGVIDQSGHTLSYVASGVIKTADADLPSRLGTIFEGISTLIRQHSPDQSAIEKVFVNVNPQSTLLLGQARGAAICGLVASGVPVAEYTALQLKQAVVGYGRATKEQMQQMVVRLLNLSGVPGTDAADALGMAICHAHGGTTLSTLGGIAPSLAKKGLRVRRGRLVG</sequence>
<gene>
    <name evidence="1" type="primary">ruvC</name>
    <name type="ordered locus">Bphyt_3343</name>
</gene>
<proteinExistence type="inferred from homology"/>
<comment type="function">
    <text evidence="1">The RuvA-RuvB-RuvC complex processes Holliday junction (HJ) DNA during genetic recombination and DNA repair. Endonuclease that resolves HJ intermediates. Cleaves cruciform DNA by making single-stranded nicks across the HJ at symmetrical positions within the homologous arms, yielding a 5'-phosphate and a 3'-hydroxyl group; requires a central core of homology in the junction. The consensus cleavage sequence is 5'-(A/T)TT(C/G)-3'. Cleavage occurs on the 3'-side of the TT dinucleotide at the point of strand exchange. HJ branch migration catalyzed by RuvA-RuvB allows RuvC to scan DNA until it finds its consensus sequence, where it cleaves and resolves the cruciform DNA.</text>
</comment>
<comment type="catalytic activity">
    <reaction evidence="1">
        <text>Endonucleolytic cleavage at a junction such as a reciprocal single-stranded crossover between two homologous DNA duplexes (Holliday junction).</text>
        <dbReference type="EC" id="3.1.21.10"/>
    </reaction>
</comment>
<comment type="cofactor">
    <cofactor evidence="1">
        <name>Mg(2+)</name>
        <dbReference type="ChEBI" id="CHEBI:18420"/>
    </cofactor>
    <text evidence="1">Binds 2 Mg(2+) ion per subunit.</text>
</comment>
<comment type="subunit">
    <text evidence="1">Homodimer which binds Holliday junction (HJ) DNA. The HJ becomes 2-fold symmetrical on binding to RuvC with unstacked arms; it has a different conformation from HJ DNA in complex with RuvA. In the full resolvosome a probable DNA-RuvA(4)-RuvB(12)-RuvC(2) complex forms which resolves the HJ.</text>
</comment>
<comment type="subcellular location">
    <subcellularLocation>
        <location evidence="1">Cytoplasm</location>
    </subcellularLocation>
</comment>
<comment type="similarity">
    <text evidence="1">Belongs to the RuvC family.</text>
</comment>
<dbReference type="EC" id="3.1.21.10" evidence="1"/>
<dbReference type="EMBL" id="CP001052">
    <property type="protein sequence ID" value="ACD17734.1"/>
    <property type="molecule type" value="Genomic_DNA"/>
</dbReference>
<dbReference type="RefSeq" id="WP_012434301.1">
    <property type="nucleotide sequence ID" value="NC_010681.1"/>
</dbReference>
<dbReference type="SMR" id="B2SYJ9"/>
<dbReference type="STRING" id="398527.Bphyt_3343"/>
<dbReference type="KEGG" id="bpy:Bphyt_3343"/>
<dbReference type="eggNOG" id="COG0817">
    <property type="taxonomic scope" value="Bacteria"/>
</dbReference>
<dbReference type="HOGENOM" id="CLU_091257_2_0_4"/>
<dbReference type="OrthoDB" id="9805499at2"/>
<dbReference type="Proteomes" id="UP000001739">
    <property type="component" value="Chromosome 1"/>
</dbReference>
<dbReference type="GO" id="GO:0005737">
    <property type="term" value="C:cytoplasm"/>
    <property type="evidence" value="ECO:0007669"/>
    <property type="project" value="UniProtKB-SubCell"/>
</dbReference>
<dbReference type="GO" id="GO:0048476">
    <property type="term" value="C:Holliday junction resolvase complex"/>
    <property type="evidence" value="ECO:0007669"/>
    <property type="project" value="UniProtKB-UniRule"/>
</dbReference>
<dbReference type="GO" id="GO:0008821">
    <property type="term" value="F:crossover junction DNA endonuclease activity"/>
    <property type="evidence" value="ECO:0007669"/>
    <property type="project" value="UniProtKB-UniRule"/>
</dbReference>
<dbReference type="GO" id="GO:0003677">
    <property type="term" value="F:DNA binding"/>
    <property type="evidence" value="ECO:0007669"/>
    <property type="project" value="UniProtKB-KW"/>
</dbReference>
<dbReference type="GO" id="GO:0000287">
    <property type="term" value="F:magnesium ion binding"/>
    <property type="evidence" value="ECO:0007669"/>
    <property type="project" value="UniProtKB-UniRule"/>
</dbReference>
<dbReference type="GO" id="GO:0006310">
    <property type="term" value="P:DNA recombination"/>
    <property type="evidence" value="ECO:0007669"/>
    <property type="project" value="UniProtKB-UniRule"/>
</dbReference>
<dbReference type="GO" id="GO:0006281">
    <property type="term" value="P:DNA repair"/>
    <property type="evidence" value="ECO:0007669"/>
    <property type="project" value="UniProtKB-UniRule"/>
</dbReference>
<dbReference type="CDD" id="cd16962">
    <property type="entry name" value="RuvC"/>
    <property type="match status" value="1"/>
</dbReference>
<dbReference type="FunFam" id="3.30.420.10:FF:000002">
    <property type="entry name" value="Crossover junction endodeoxyribonuclease RuvC"/>
    <property type="match status" value="1"/>
</dbReference>
<dbReference type="Gene3D" id="3.30.420.10">
    <property type="entry name" value="Ribonuclease H-like superfamily/Ribonuclease H"/>
    <property type="match status" value="1"/>
</dbReference>
<dbReference type="HAMAP" id="MF_00034">
    <property type="entry name" value="RuvC"/>
    <property type="match status" value="1"/>
</dbReference>
<dbReference type="InterPro" id="IPR012337">
    <property type="entry name" value="RNaseH-like_sf"/>
</dbReference>
<dbReference type="InterPro" id="IPR036397">
    <property type="entry name" value="RNaseH_sf"/>
</dbReference>
<dbReference type="InterPro" id="IPR020563">
    <property type="entry name" value="X-over_junc_endoDNase_Mg_BS"/>
</dbReference>
<dbReference type="InterPro" id="IPR002176">
    <property type="entry name" value="X-over_junc_endoDNase_RuvC"/>
</dbReference>
<dbReference type="NCBIfam" id="TIGR00228">
    <property type="entry name" value="ruvC"/>
    <property type="match status" value="1"/>
</dbReference>
<dbReference type="PANTHER" id="PTHR30194">
    <property type="entry name" value="CROSSOVER JUNCTION ENDODEOXYRIBONUCLEASE RUVC"/>
    <property type="match status" value="1"/>
</dbReference>
<dbReference type="PANTHER" id="PTHR30194:SF3">
    <property type="entry name" value="CROSSOVER JUNCTION ENDODEOXYRIBONUCLEASE RUVC"/>
    <property type="match status" value="1"/>
</dbReference>
<dbReference type="Pfam" id="PF02075">
    <property type="entry name" value="RuvC"/>
    <property type="match status" value="1"/>
</dbReference>
<dbReference type="PRINTS" id="PR00696">
    <property type="entry name" value="RSOLVASERUVC"/>
</dbReference>
<dbReference type="SUPFAM" id="SSF53098">
    <property type="entry name" value="Ribonuclease H-like"/>
    <property type="match status" value="1"/>
</dbReference>
<dbReference type="PROSITE" id="PS01321">
    <property type="entry name" value="RUVC"/>
    <property type="match status" value="1"/>
</dbReference>
<reference key="1">
    <citation type="journal article" date="2011" name="J. Bacteriol.">
        <title>Complete genome sequence of the plant growth-promoting endophyte Burkholderia phytofirmans strain PsJN.</title>
        <authorList>
            <person name="Weilharter A."/>
            <person name="Mitter B."/>
            <person name="Shin M.V."/>
            <person name="Chain P.S."/>
            <person name="Nowak J."/>
            <person name="Sessitsch A."/>
        </authorList>
    </citation>
    <scope>NUCLEOTIDE SEQUENCE [LARGE SCALE GENOMIC DNA]</scope>
    <source>
        <strain>DSM 17436 / LMG 22146 / PsJN</strain>
    </source>
</reference>